<protein>
    <recommendedName>
        <fullName>Phenol-soluble modulin alpha 3 peptide</fullName>
    </recommendedName>
</protein>
<organism>
    <name type="scientific">Staphylococcus aureus (strain Mu50 / ATCC 700699)</name>
    <dbReference type="NCBI Taxonomy" id="158878"/>
    <lineage>
        <taxon>Bacteria</taxon>
        <taxon>Bacillati</taxon>
        <taxon>Bacillota</taxon>
        <taxon>Bacilli</taxon>
        <taxon>Bacillales</taxon>
        <taxon>Staphylococcaceae</taxon>
        <taxon>Staphylococcus</taxon>
    </lineage>
</organism>
<feature type="peptide" id="PRO_0000345065" description="Phenol-soluble modulin alpha 3 peptide">
    <location>
        <begin position="1"/>
        <end position="22"/>
    </location>
</feature>
<reference key="1">
    <citation type="journal article" date="2001" name="Lancet">
        <title>Whole genome sequencing of meticillin-resistant Staphylococcus aureus.</title>
        <authorList>
            <person name="Kuroda M."/>
            <person name="Ohta T."/>
            <person name="Uchiyama I."/>
            <person name="Baba T."/>
            <person name="Yuzawa H."/>
            <person name="Kobayashi I."/>
            <person name="Cui L."/>
            <person name="Oguchi A."/>
            <person name="Aoki K."/>
            <person name="Nagai Y."/>
            <person name="Lian J.-Q."/>
            <person name="Ito T."/>
            <person name="Kanamori M."/>
            <person name="Matsumaru H."/>
            <person name="Maruyama A."/>
            <person name="Murakami H."/>
            <person name="Hosoyama A."/>
            <person name="Mizutani-Ui Y."/>
            <person name="Takahashi N.K."/>
            <person name="Sawano T."/>
            <person name="Inoue R."/>
            <person name="Kaito C."/>
            <person name="Sekimizu K."/>
            <person name="Hirakawa H."/>
            <person name="Kuhara S."/>
            <person name="Goto S."/>
            <person name="Yabuzaki J."/>
            <person name="Kanehisa M."/>
            <person name="Yamashita A."/>
            <person name="Oshima K."/>
            <person name="Furuya K."/>
            <person name="Yoshino C."/>
            <person name="Shiba T."/>
            <person name="Hattori M."/>
            <person name="Ogasawara N."/>
            <person name="Hayashi H."/>
            <person name="Hiramatsu K."/>
        </authorList>
    </citation>
    <scope>NUCLEOTIDE SEQUENCE [LARGE SCALE GENOMIC DNA]</scope>
    <source>
        <strain>Mu50 / ATCC 700699</strain>
    </source>
</reference>
<accession>P0C810</accession>
<evidence type="ECO:0000250" key="1">
    <source>
        <dbReference type="UniProtKB" id="A9JX07"/>
    </source>
</evidence>
<evidence type="ECO:0000305" key="2"/>
<comment type="function">
    <text evidence="1">Peptide which can recruit, activate and subsequently lyse human neutrophils, thus eliminating the main cellular defense against infection.</text>
</comment>
<comment type="similarity">
    <text evidence="2">Belongs to the phenol-soluble modulin alpha peptides family.</text>
</comment>
<keyword id="KW-0204">Cytolysis</keyword>
<keyword id="KW-0843">Virulence</keyword>
<name>PSMA3_STAAM</name>
<dbReference type="EMBL" id="BA000017">
    <property type="status" value="NOT_ANNOTATED_CDS"/>
    <property type="molecule type" value="Genomic_DNA"/>
</dbReference>
<dbReference type="RefSeq" id="WP_014373779.1">
    <property type="nucleotide sequence ID" value="NC_002758.2"/>
</dbReference>
<dbReference type="SMR" id="P0C810"/>
<dbReference type="Proteomes" id="UP000002481">
    <property type="component" value="Chromosome"/>
</dbReference>
<dbReference type="GO" id="GO:0031640">
    <property type="term" value="P:killing of cells of another organism"/>
    <property type="evidence" value="ECO:0007669"/>
    <property type="project" value="UniProtKB-KW"/>
</dbReference>
<dbReference type="InterPro" id="IPR031429">
    <property type="entry name" value="PSM_alpha"/>
</dbReference>
<dbReference type="InterPro" id="IPR053383">
    <property type="entry name" value="PSM_alpha_peptides"/>
</dbReference>
<dbReference type="NCBIfam" id="NF033426">
    <property type="entry name" value="PSM_alpha_3"/>
    <property type="match status" value="1"/>
</dbReference>
<dbReference type="Pfam" id="PF17063">
    <property type="entry name" value="PSMalpha"/>
    <property type="match status" value="1"/>
</dbReference>
<sequence>MEFVAKLFKFFKDLLGKFLGNN</sequence>
<gene>
    <name type="primary">psmA3</name>
    <name type="ordered locus">SAV0451.2</name>
</gene>
<proteinExistence type="inferred from homology"/>